<reference key="1">
    <citation type="journal article" date="2006" name="Proc. Natl. Acad. Sci. U.S.A.">
        <title>Multireplicon genome architecture of Lactobacillus salivarius.</title>
        <authorList>
            <person name="Claesson M.J."/>
            <person name="Li Y."/>
            <person name="Leahy S."/>
            <person name="Canchaya C."/>
            <person name="van Pijkeren J.P."/>
            <person name="Cerdeno-Tarraga A.M."/>
            <person name="Parkhill J."/>
            <person name="Flynn S."/>
            <person name="O'Sullivan G.C."/>
            <person name="Collins J.K."/>
            <person name="Higgins D."/>
            <person name="Shanahan F."/>
            <person name="Fitzgerald G.F."/>
            <person name="van Sinderen D."/>
            <person name="O'Toole P.W."/>
        </authorList>
    </citation>
    <scope>NUCLEOTIDE SEQUENCE [LARGE SCALE GENOMIC DNA]</scope>
    <source>
        <strain>UCC118</strain>
    </source>
</reference>
<proteinExistence type="inferred from homology"/>
<accession>Q1WVN7</accession>
<comment type="function">
    <text evidence="1">Binds as a heterodimer with protein bS6 to the central domain of the 16S rRNA, where it helps stabilize the platform of the 30S subunit.</text>
</comment>
<comment type="subunit">
    <text evidence="1">Part of the 30S ribosomal subunit. Forms a tight heterodimer with protein bS6.</text>
</comment>
<comment type="similarity">
    <text evidence="1">Belongs to the bacterial ribosomal protein bS18 family.</text>
</comment>
<feature type="chain" id="PRO_1000003521" description="Small ribosomal subunit protein bS18">
    <location>
        <begin position="1"/>
        <end position="78"/>
    </location>
</feature>
<sequence>MAQQRRGGRRRRKVDYIAANHIEYIDYKDTDLLRRFISERGKILPRRVTGTSAKNQRKLTVAIKRARIMGLLPFVAED</sequence>
<gene>
    <name evidence="1" type="primary">rpsR</name>
    <name type="ordered locus">LSL_0009</name>
</gene>
<keyword id="KW-1185">Reference proteome</keyword>
<keyword id="KW-0687">Ribonucleoprotein</keyword>
<keyword id="KW-0689">Ribosomal protein</keyword>
<keyword id="KW-0694">RNA-binding</keyword>
<keyword id="KW-0699">rRNA-binding</keyword>
<evidence type="ECO:0000255" key="1">
    <source>
        <dbReference type="HAMAP-Rule" id="MF_00270"/>
    </source>
</evidence>
<evidence type="ECO:0000305" key="2"/>
<dbReference type="EMBL" id="CP000233">
    <property type="protein sequence ID" value="ABD98832.1"/>
    <property type="molecule type" value="Genomic_DNA"/>
</dbReference>
<dbReference type="RefSeq" id="WP_003701427.1">
    <property type="nucleotide sequence ID" value="NC_007929.1"/>
</dbReference>
<dbReference type="RefSeq" id="YP_534915.1">
    <property type="nucleotide sequence ID" value="NC_007929.1"/>
</dbReference>
<dbReference type="SMR" id="Q1WVN7"/>
<dbReference type="STRING" id="362948.LSL_0009"/>
<dbReference type="GeneID" id="89464725"/>
<dbReference type="KEGG" id="lsl:LSL_0009"/>
<dbReference type="PATRIC" id="fig|362948.14.peg.80"/>
<dbReference type="HOGENOM" id="CLU_148710_2_2_9"/>
<dbReference type="OrthoDB" id="9812008at2"/>
<dbReference type="Proteomes" id="UP000006559">
    <property type="component" value="Chromosome"/>
</dbReference>
<dbReference type="GO" id="GO:0022627">
    <property type="term" value="C:cytosolic small ribosomal subunit"/>
    <property type="evidence" value="ECO:0007669"/>
    <property type="project" value="TreeGrafter"/>
</dbReference>
<dbReference type="GO" id="GO:0070181">
    <property type="term" value="F:small ribosomal subunit rRNA binding"/>
    <property type="evidence" value="ECO:0007669"/>
    <property type="project" value="TreeGrafter"/>
</dbReference>
<dbReference type="GO" id="GO:0003735">
    <property type="term" value="F:structural constituent of ribosome"/>
    <property type="evidence" value="ECO:0007669"/>
    <property type="project" value="InterPro"/>
</dbReference>
<dbReference type="GO" id="GO:0006412">
    <property type="term" value="P:translation"/>
    <property type="evidence" value="ECO:0007669"/>
    <property type="project" value="UniProtKB-UniRule"/>
</dbReference>
<dbReference type="FunFam" id="4.10.640.10:FF:000003">
    <property type="entry name" value="30S ribosomal protein S18"/>
    <property type="match status" value="1"/>
</dbReference>
<dbReference type="Gene3D" id="4.10.640.10">
    <property type="entry name" value="Ribosomal protein S18"/>
    <property type="match status" value="1"/>
</dbReference>
<dbReference type="HAMAP" id="MF_00270">
    <property type="entry name" value="Ribosomal_bS18"/>
    <property type="match status" value="1"/>
</dbReference>
<dbReference type="InterPro" id="IPR001648">
    <property type="entry name" value="Ribosomal_bS18"/>
</dbReference>
<dbReference type="InterPro" id="IPR018275">
    <property type="entry name" value="Ribosomal_bS18_CS"/>
</dbReference>
<dbReference type="InterPro" id="IPR036870">
    <property type="entry name" value="Ribosomal_bS18_sf"/>
</dbReference>
<dbReference type="NCBIfam" id="TIGR00165">
    <property type="entry name" value="S18"/>
    <property type="match status" value="1"/>
</dbReference>
<dbReference type="PANTHER" id="PTHR13479">
    <property type="entry name" value="30S RIBOSOMAL PROTEIN S18"/>
    <property type="match status" value="1"/>
</dbReference>
<dbReference type="PANTHER" id="PTHR13479:SF40">
    <property type="entry name" value="SMALL RIBOSOMAL SUBUNIT PROTEIN BS18M"/>
    <property type="match status" value="1"/>
</dbReference>
<dbReference type="Pfam" id="PF01084">
    <property type="entry name" value="Ribosomal_S18"/>
    <property type="match status" value="1"/>
</dbReference>
<dbReference type="PRINTS" id="PR00974">
    <property type="entry name" value="RIBOSOMALS18"/>
</dbReference>
<dbReference type="SUPFAM" id="SSF46911">
    <property type="entry name" value="Ribosomal protein S18"/>
    <property type="match status" value="1"/>
</dbReference>
<dbReference type="PROSITE" id="PS00057">
    <property type="entry name" value="RIBOSOMAL_S18"/>
    <property type="match status" value="1"/>
</dbReference>
<organism>
    <name type="scientific">Ligilactobacillus salivarius (strain UCC118)</name>
    <name type="common">Lactobacillus salivarius</name>
    <dbReference type="NCBI Taxonomy" id="362948"/>
    <lineage>
        <taxon>Bacteria</taxon>
        <taxon>Bacillati</taxon>
        <taxon>Bacillota</taxon>
        <taxon>Bacilli</taxon>
        <taxon>Lactobacillales</taxon>
        <taxon>Lactobacillaceae</taxon>
        <taxon>Ligilactobacillus</taxon>
    </lineage>
</organism>
<protein>
    <recommendedName>
        <fullName evidence="1">Small ribosomal subunit protein bS18</fullName>
    </recommendedName>
    <alternativeName>
        <fullName evidence="2">30S ribosomal protein S18</fullName>
    </alternativeName>
</protein>
<name>RS18_LIGS1</name>